<protein>
    <recommendedName>
        <fullName evidence="1">4-hydroxy-3-methylbut-2-enyl diphosphate reductase</fullName>
        <shortName evidence="1">HMBPP reductase</shortName>
        <ecNumber evidence="1">1.17.7.4</ecNumber>
    </recommendedName>
</protein>
<accession>Q1B4H4</accession>
<sequence>MPPTINMGIPGASSSVTGGVSGKRVLLAEPRGYCAGVDRAVETVERALEKHGAPVYVRHEIVHNRYVVDTLAKAGAVFVEQTDEVPEGAIVVFSAHGVAPTVHVEAAARNLKTIDATCPLVTKVHNEAKRFARDDYDILLVGHEGHEEVVGTAGEAPDHVQVVDNPDAVDKVTVRDPDKVIWLSQTTLSVDETMETVRRLREKFPTLQDPPSDDICYATQNRQVAVKAMAPECELVIVVGSKNSSNSVRLVEVALGAGSDAAHLVDYAEDIDPTWLNGVTTVGVTSGASVPEVLVRGVLDRLAEYGYGTVQPVTTANETLVFALPREIRPARS</sequence>
<reference key="1">
    <citation type="submission" date="2006-06" db="EMBL/GenBank/DDBJ databases">
        <title>Complete sequence of chromosome of Mycobacterium sp. MCS.</title>
        <authorList>
            <consortium name="US DOE Joint Genome Institute"/>
            <person name="Copeland A."/>
            <person name="Lucas S."/>
            <person name="Lapidus A."/>
            <person name="Barry K."/>
            <person name="Detter J.C."/>
            <person name="Glavina del Rio T."/>
            <person name="Hammon N."/>
            <person name="Israni S."/>
            <person name="Dalin E."/>
            <person name="Tice H."/>
            <person name="Pitluck S."/>
            <person name="Martinez M."/>
            <person name="Schmutz J."/>
            <person name="Larimer F."/>
            <person name="Land M."/>
            <person name="Hauser L."/>
            <person name="Kyrpides N."/>
            <person name="Kim E."/>
            <person name="Miller C.D."/>
            <person name="Hughes J.E."/>
            <person name="Anderson A.J."/>
            <person name="Sims R.C."/>
            <person name="Richardson P."/>
        </authorList>
    </citation>
    <scope>NUCLEOTIDE SEQUENCE [LARGE SCALE GENOMIC DNA]</scope>
    <source>
        <strain>MCS</strain>
    </source>
</reference>
<dbReference type="EC" id="1.17.7.4" evidence="1"/>
<dbReference type="EMBL" id="CP000384">
    <property type="protein sequence ID" value="ABG10210.1"/>
    <property type="molecule type" value="Genomic_DNA"/>
</dbReference>
<dbReference type="SMR" id="Q1B4H4"/>
<dbReference type="KEGG" id="mmc:Mmcs_4105"/>
<dbReference type="HOGENOM" id="CLU_027486_1_0_11"/>
<dbReference type="BioCyc" id="MSP164756:G1G6O-4192-MONOMER"/>
<dbReference type="UniPathway" id="UPA00056">
    <property type="reaction ID" value="UER00097"/>
</dbReference>
<dbReference type="UniPathway" id="UPA00059">
    <property type="reaction ID" value="UER00105"/>
</dbReference>
<dbReference type="GO" id="GO:0051539">
    <property type="term" value="F:4 iron, 4 sulfur cluster binding"/>
    <property type="evidence" value="ECO:0007669"/>
    <property type="project" value="UniProtKB-UniRule"/>
</dbReference>
<dbReference type="GO" id="GO:0051745">
    <property type="term" value="F:4-hydroxy-3-methylbut-2-enyl diphosphate reductase activity"/>
    <property type="evidence" value="ECO:0007669"/>
    <property type="project" value="UniProtKB-UniRule"/>
</dbReference>
<dbReference type="GO" id="GO:0046872">
    <property type="term" value="F:metal ion binding"/>
    <property type="evidence" value="ECO:0007669"/>
    <property type="project" value="UniProtKB-KW"/>
</dbReference>
<dbReference type="GO" id="GO:0050992">
    <property type="term" value="P:dimethylallyl diphosphate biosynthetic process"/>
    <property type="evidence" value="ECO:0007669"/>
    <property type="project" value="UniProtKB-UniRule"/>
</dbReference>
<dbReference type="GO" id="GO:0019288">
    <property type="term" value="P:isopentenyl diphosphate biosynthetic process, methylerythritol 4-phosphate pathway"/>
    <property type="evidence" value="ECO:0007669"/>
    <property type="project" value="UniProtKB-UniRule"/>
</dbReference>
<dbReference type="GO" id="GO:0016114">
    <property type="term" value="P:terpenoid biosynthetic process"/>
    <property type="evidence" value="ECO:0007669"/>
    <property type="project" value="UniProtKB-UniRule"/>
</dbReference>
<dbReference type="CDD" id="cd13944">
    <property type="entry name" value="lytB_ispH"/>
    <property type="match status" value="1"/>
</dbReference>
<dbReference type="Gene3D" id="3.40.50.11270">
    <property type="match status" value="1"/>
</dbReference>
<dbReference type="Gene3D" id="3.40.1010.20">
    <property type="entry name" value="4-hydroxy-3-methylbut-2-enyl diphosphate reductase, catalytic domain"/>
    <property type="match status" value="2"/>
</dbReference>
<dbReference type="HAMAP" id="MF_00191">
    <property type="entry name" value="IspH"/>
    <property type="match status" value="1"/>
</dbReference>
<dbReference type="InterPro" id="IPR003451">
    <property type="entry name" value="LytB/IspH"/>
</dbReference>
<dbReference type="NCBIfam" id="TIGR00216">
    <property type="entry name" value="ispH_lytB"/>
    <property type="match status" value="1"/>
</dbReference>
<dbReference type="NCBIfam" id="NF002188">
    <property type="entry name" value="PRK01045.1-2"/>
    <property type="match status" value="1"/>
</dbReference>
<dbReference type="NCBIfam" id="NF002189">
    <property type="entry name" value="PRK01045.1-3"/>
    <property type="match status" value="1"/>
</dbReference>
<dbReference type="NCBIfam" id="NF002190">
    <property type="entry name" value="PRK01045.1-4"/>
    <property type="match status" value="1"/>
</dbReference>
<dbReference type="PANTHER" id="PTHR30426">
    <property type="entry name" value="4-HYDROXY-3-METHYLBUT-2-ENYL DIPHOSPHATE REDUCTASE"/>
    <property type="match status" value="1"/>
</dbReference>
<dbReference type="PANTHER" id="PTHR30426:SF0">
    <property type="entry name" value="4-HYDROXY-3-METHYLBUT-2-ENYL DIPHOSPHATE REDUCTASE"/>
    <property type="match status" value="1"/>
</dbReference>
<dbReference type="Pfam" id="PF02401">
    <property type="entry name" value="LYTB"/>
    <property type="match status" value="1"/>
</dbReference>
<keyword id="KW-0004">4Fe-4S</keyword>
<keyword id="KW-0408">Iron</keyword>
<keyword id="KW-0411">Iron-sulfur</keyword>
<keyword id="KW-0414">Isoprene biosynthesis</keyword>
<keyword id="KW-0479">Metal-binding</keyword>
<keyword id="KW-0560">Oxidoreductase</keyword>
<organism>
    <name type="scientific">Mycobacterium sp. (strain MCS)</name>
    <dbReference type="NCBI Taxonomy" id="164756"/>
    <lineage>
        <taxon>Bacteria</taxon>
        <taxon>Bacillati</taxon>
        <taxon>Actinomycetota</taxon>
        <taxon>Actinomycetes</taxon>
        <taxon>Mycobacteriales</taxon>
        <taxon>Mycobacteriaceae</taxon>
        <taxon>Mycobacterium</taxon>
    </lineage>
</organism>
<evidence type="ECO:0000255" key="1">
    <source>
        <dbReference type="HAMAP-Rule" id="MF_00191"/>
    </source>
</evidence>
<gene>
    <name evidence="1" type="primary">ispH</name>
    <name type="ordered locus">Mmcs_4105</name>
</gene>
<comment type="function">
    <text evidence="1">Catalyzes the conversion of 1-hydroxy-2-methyl-2-(E)-butenyl 4-diphosphate (HMBPP) into a mixture of isopentenyl diphosphate (IPP) and dimethylallyl diphosphate (DMAPP). Acts in the terminal step of the DOXP/MEP pathway for isoprenoid precursor biosynthesis.</text>
</comment>
<comment type="catalytic activity">
    <reaction evidence="1">
        <text>isopentenyl diphosphate + 2 oxidized [2Fe-2S]-[ferredoxin] + H2O = (2E)-4-hydroxy-3-methylbut-2-enyl diphosphate + 2 reduced [2Fe-2S]-[ferredoxin] + 2 H(+)</text>
        <dbReference type="Rhea" id="RHEA:24488"/>
        <dbReference type="Rhea" id="RHEA-COMP:10000"/>
        <dbReference type="Rhea" id="RHEA-COMP:10001"/>
        <dbReference type="ChEBI" id="CHEBI:15377"/>
        <dbReference type="ChEBI" id="CHEBI:15378"/>
        <dbReference type="ChEBI" id="CHEBI:33737"/>
        <dbReference type="ChEBI" id="CHEBI:33738"/>
        <dbReference type="ChEBI" id="CHEBI:128753"/>
        <dbReference type="ChEBI" id="CHEBI:128769"/>
        <dbReference type="EC" id="1.17.7.4"/>
    </reaction>
</comment>
<comment type="catalytic activity">
    <reaction evidence="1">
        <text>dimethylallyl diphosphate + 2 oxidized [2Fe-2S]-[ferredoxin] + H2O = (2E)-4-hydroxy-3-methylbut-2-enyl diphosphate + 2 reduced [2Fe-2S]-[ferredoxin] + 2 H(+)</text>
        <dbReference type="Rhea" id="RHEA:24825"/>
        <dbReference type="Rhea" id="RHEA-COMP:10000"/>
        <dbReference type="Rhea" id="RHEA-COMP:10001"/>
        <dbReference type="ChEBI" id="CHEBI:15377"/>
        <dbReference type="ChEBI" id="CHEBI:15378"/>
        <dbReference type="ChEBI" id="CHEBI:33737"/>
        <dbReference type="ChEBI" id="CHEBI:33738"/>
        <dbReference type="ChEBI" id="CHEBI:57623"/>
        <dbReference type="ChEBI" id="CHEBI:128753"/>
        <dbReference type="EC" id="1.17.7.4"/>
    </reaction>
</comment>
<comment type="cofactor">
    <cofactor evidence="1">
        <name>[4Fe-4S] cluster</name>
        <dbReference type="ChEBI" id="CHEBI:49883"/>
    </cofactor>
    <text evidence="1">Binds 1 [4Fe-4S] cluster per subunit.</text>
</comment>
<comment type="pathway">
    <text evidence="1">Isoprenoid biosynthesis; dimethylallyl diphosphate biosynthesis; dimethylallyl diphosphate from (2E)-4-hydroxy-3-methylbutenyl diphosphate: step 1/1.</text>
</comment>
<comment type="pathway">
    <text evidence="1">Isoprenoid biosynthesis; isopentenyl diphosphate biosynthesis via DXP pathway; isopentenyl diphosphate from 1-deoxy-D-xylulose 5-phosphate: step 6/6.</text>
</comment>
<comment type="similarity">
    <text evidence="1">Belongs to the IspH family.</text>
</comment>
<name>ISPH_MYCSS</name>
<feature type="chain" id="PRO_1000021139" description="4-hydroxy-3-methylbut-2-enyl diphosphate reductase">
    <location>
        <begin position="1"/>
        <end position="333"/>
    </location>
</feature>
<feature type="active site" description="Proton donor" evidence="1">
    <location>
        <position position="148"/>
    </location>
</feature>
<feature type="binding site" evidence="1">
    <location>
        <position position="34"/>
    </location>
    <ligand>
        <name>[4Fe-4S] cluster</name>
        <dbReference type="ChEBI" id="CHEBI:49883"/>
    </ligand>
</feature>
<feature type="binding site" evidence="1">
    <location>
        <position position="63"/>
    </location>
    <ligand>
        <name>(2E)-4-hydroxy-3-methylbut-2-enyl diphosphate</name>
        <dbReference type="ChEBI" id="CHEBI:128753"/>
    </ligand>
</feature>
<feature type="binding site" evidence="1">
    <location>
        <position position="63"/>
    </location>
    <ligand>
        <name>dimethylallyl diphosphate</name>
        <dbReference type="ChEBI" id="CHEBI:57623"/>
    </ligand>
</feature>
<feature type="binding site" evidence="1">
    <location>
        <position position="63"/>
    </location>
    <ligand>
        <name>isopentenyl diphosphate</name>
        <dbReference type="ChEBI" id="CHEBI:128769"/>
    </ligand>
</feature>
<feature type="binding site" evidence="1">
    <location>
        <position position="96"/>
    </location>
    <ligand>
        <name>(2E)-4-hydroxy-3-methylbut-2-enyl diphosphate</name>
        <dbReference type="ChEBI" id="CHEBI:128753"/>
    </ligand>
</feature>
<feature type="binding site" evidence="1">
    <location>
        <position position="96"/>
    </location>
    <ligand>
        <name>dimethylallyl diphosphate</name>
        <dbReference type="ChEBI" id="CHEBI:57623"/>
    </ligand>
</feature>
<feature type="binding site" evidence="1">
    <location>
        <position position="96"/>
    </location>
    <ligand>
        <name>isopentenyl diphosphate</name>
        <dbReference type="ChEBI" id="CHEBI:128769"/>
    </ligand>
</feature>
<feature type="binding site" evidence="1">
    <location>
        <position position="118"/>
    </location>
    <ligand>
        <name>[4Fe-4S] cluster</name>
        <dbReference type="ChEBI" id="CHEBI:49883"/>
    </ligand>
</feature>
<feature type="binding site" evidence="1">
    <location>
        <position position="146"/>
    </location>
    <ligand>
        <name>(2E)-4-hydroxy-3-methylbut-2-enyl diphosphate</name>
        <dbReference type="ChEBI" id="CHEBI:128753"/>
    </ligand>
</feature>
<feature type="binding site" evidence="1">
    <location>
        <position position="146"/>
    </location>
    <ligand>
        <name>dimethylallyl diphosphate</name>
        <dbReference type="ChEBI" id="CHEBI:57623"/>
    </ligand>
</feature>
<feature type="binding site" evidence="1">
    <location>
        <position position="146"/>
    </location>
    <ligand>
        <name>isopentenyl diphosphate</name>
        <dbReference type="ChEBI" id="CHEBI:128769"/>
    </ligand>
</feature>
<feature type="binding site" evidence="1">
    <location>
        <position position="186"/>
    </location>
    <ligand>
        <name>(2E)-4-hydroxy-3-methylbut-2-enyl diphosphate</name>
        <dbReference type="ChEBI" id="CHEBI:128753"/>
    </ligand>
</feature>
<feature type="binding site" evidence="1">
    <location>
        <position position="216"/>
    </location>
    <ligand>
        <name>[4Fe-4S] cluster</name>
        <dbReference type="ChEBI" id="CHEBI:49883"/>
    </ligand>
</feature>
<feature type="binding site" evidence="1">
    <location>
        <position position="244"/>
    </location>
    <ligand>
        <name>(2E)-4-hydroxy-3-methylbut-2-enyl diphosphate</name>
        <dbReference type="ChEBI" id="CHEBI:128753"/>
    </ligand>
</feature>
<feature type="binding site" evidence="1">
    <location>
        <position position="244"/>
    </location>
    <ligand>
        <name>dimethylallyl diphosphate</name>
        <dbReference type="ChEBI" id="CHEBI:57623"/>
    </ligand>
</feature>
<feature type="binding site" evidence="1">
    <location>
        <position position="244"/>
    </location>
    <ligand>
        <name>isopentenyl diphosphate</name>
        <dbReference type="ChEBI" id="CHEBI:128769"/>
    </ligand>
</feature>
<feature type="binding site" evidence="1">
    <location>
        <position position="245"/>
    </location>
    <ligand>
        <name>(2E)-4-hydroxy-3-methylbut-2-enyl diphosphate</name>
        <dbReference type="ChEBI" id="CHEBI:128753"/>
    </ligand>
</feature>
<feature type="binding site" evidence="1">
    <location>
        <position position="245"/>
    </location>
    <ligand>
        <name>dimethylallyl diphosphate</name>
        <dbReference type="ChEBI" id="CHEBI:57623"/>
    </ligand>
</feature>
<feature type="binding site" evidence="1">
    <location>
        <position position="245"/>
    </location>
    <ligand>
        <name>isopentenyl diphosphate</name>
        <dbReference type="ChEBI" id="CHEBI:128769"/>
    </ligand>
</feature>
<feature type="binding site" evidence="1">
    <location>
        <position position="246"/>
    </location>
    <ligand>
        <name>(2E)-4-hydroxy-3-methylbut-2-enyl diphosphate</name>
        <dbReference type="ChEBI" id="CHEBI:128753"/>
    </ligand>
</feature>
<feature type="binding site" evidence="1">
    <location>
        <position position="246"/>
    </location>
    <ligand>
        <name>dimethylallyl diphosphate</name>
        <dbReference type="ChEBI" id="CHEBI:57623"/>
    </ligand>
</feature>
<feature type="binding site" evidence="1">
    <location>
        <position position="246"/>
    </location>
    <ligand>
        <name>isopentenyl diphosphate</name>
        <dbReference type="ChEBI" id="CHEBI:128769"/>
    </ligand>
</feature>
<feature type="binding site" evidence="1">
    <location>
        <position position="289"/>
    </location>
    <ligand>
        <name>(2E)-4-hydroxy-3-methylbut-2-enyl diphosphate</name>
        <dbReference type="ChEBI" id="CHEBI:128753"/>
    </ligand>
</feature>
<feature type="binding site" evidence="1">
    <location>
        <position position="289"/>
    </location>
    <ligand>
        <name>dimethylallyl diphosphate</name>
        <dbReference type="ChEBI" id="CHEBI:57623"/>
    </ligand>
</feature>
<feature type="binding site" evidence="1">
    <location>
        <position position="289"/>
    </location>
    <ligand>
        <name>isopentenyl diphosphate</name>
        <dbReference type="ChEBI" id="CHEBI:128769"/>
    </ligand>
</feature>
<proteinExistence type="inferred from homology"/>